<protein>
    <recommendedName>
        <fullName>Acyl-homoserine-lactone synthase LuxM</fullName>
        <shortName>AHL synthase LuxM</shortName>
        <ecNumber>2.3.1.184</ecNumber>
    </recommendedName>
</protein>
<sequence length="399" mass="46385">MKLMLSLGSLSANSLPIEKKQQVLIDLVIRTYQSHERTELFKAITEYRKNQLIALFPEHANKSYSIIFELMDYRDLIERYPSTLSEEATLLEKVVGQCFMHWLDFWCECEIAAIKAKFPLKENELPAPQLLFEDSAYYGALVERVEDTQLMVQIPSHPQAMPLSDAITLSNLELFIQGEKWYEMLSLLSLSQVGKHFIVLKHPVQDSCPTLVASALIQNWSVRDTWLSYAPQFSNEQWNYCFPSYGYSEFTRLQLFTPSTLSKCYSLPEFDNEFKLQLSDTQAVCEVLRLTVSGNAQQKLYFLYLAQKELMSVLHQAGYKIGFTIIEQPFMLNFYRAIDAKAYFHSGYCDLNDDGKQTYRGFWNFEMMVKAFSNIDFRGYKRAVRASRKRGSLERDEHV</sequence>
<reference key="1">
    <citation type="submission" date="2007-08" db="EMBL/GenBank/DDBJ databases">
        <authorList>
            <consortium name="The Vibrio harveyi Genome Sequencing Project"/>
            <person name="Bassler B."/>
            <person name="Clifton S.W."/>
            <person name="Fulton L."/>
            <person name="Delehaunty K."/>
            <person name="Fronick C."/>
            <person name="Harrison M."/>
            <person name="Markivic C."/>
            <person name="Fulton R."/>
            <person name="Tin-Wollam A.-M."/>
            <person name="Shah N."/>
            <person name="Pepin K."/>
            <person name="Nash W."/>
            <person name="Thiruvilangam P."/>
            <person name="Bhonagiri V."/>
            <person name="Waters C."/>
            <person name="Tu K.C."/>
            <person name="Irgon J."/>
            <person name="Wilson R.K."/>
        </authorList>
    </citation>
    <scope>NUCLEOTIDE SEQUENCE [LARGE SCALE GENOMIC DNA]</scope>
    <source>
        <strain>ATCC BAA-1116 / BB120</strain>
    </source>
</reference>
<reference key="2">
    <citation type="journal article" date="2001" name="J. Bacteriol.">
        <title>The LuxM homologue VanM from Vibrio anguillarum directs the synthesis of N-(3-hydroxyhexanoyl)homoserine lactone and N-hexanoylhomoserine lactone.</title>
        <authorList>
            <person name="Milton D.L."/>
            <person name="Chalker V.J."/>
            <person name="Kirke D."/>
            <person name="Hardman A."/>
            <person name="Camara M."/>
            <person name="Williams P."/>
        </authorList>
    </citation>
    <scope>NUCLEOTIDE SEQUENCE [GENOMIC DNA] OF 154-258</scope>
</reference>
<comment type="catalytic activity">
    <reaction>
        <text>a fatty acyl-[ACP] + S-adenosyl-L-methionine = an N-acyl-L-homoserine lactone + S-methyl-5'-thioadenosine + holo-[ACP] + H(+)</text>
        <dbReference type="Rhea" id="RHEA:10096"/>
        <dbReference type="Rhea" id="RHEA-COMP:9685"/>
        <dbReference type="Rhea" id="RHEA-COMP:14125"/>
        <dbReference type="ChEBI" id="CHEBI:15378"/>
        <dbReference type="ChEBI" id="CHEBI:17509"/>
        <dbReference type="ChEBI" id="CHEBI:55474"/>
        <dbReference type="ChEBI" id="CHEBI:59789"/>
        <dbReference type="ChEBI" id="CHEBI:64479"/>
        <dbReference type="ChEBI" id="CHEBI:138651"/>
        <dbReference type="EC" id="2.3.1.184"/>
    </reaction>
</comment>
<comment type="similarity">
    <text evidence="1">Belongs to the LuxM / VanM family.</text>
</comment>
<keyword id="KW-0071">Autoinducer synthesis</keyword>
<keyword id="KW-0673">Quorum sensing</keyword>
<keyword id="KW-0949">S-adenosyl-L-methionine</keyword>
<keyword id="KW-0808">Transferase</keyword>
<organism>
    <name type="scientific">Vibrio campbellii (strain ATCC BAA-1116)</name>
    <dbReference type="NCBI Taxonomy" id="2902295"/>
    <lineage>
        <taxon>Bacteria</taxon>
        <taxon>Pseudomonadati</taxon>
        <taxon>Pseudomonadota</taxon>
        <taxon>Gammaproteobacteria</taxon>
        <taxon>Vibrionales</taxon>
        <taxon>Vibrionaceae</taxon>
        <taxon>Vibrio</taxon>
    </lineage>
</organism>
<proteinExistence type="inferred from homology"/>
<name>LUXM_VIBC1</name>
<gene>
    <name type="primary">luxM</name>
    <name type="synonym">luxLM</name>
    <name type="ordered locus">VIBHAR_02765</name>
</gene>
<dbReference type="EC" id="2.3.1.184"/>
<dbReference type="EMBL" id="CP000789">
    <property type="protein sequence ID" value="ABU71719.1"/>
    <property type="molecule type" value="Genomic_DNA"/>
</dbReference>
<dbReference type="EMBL" id="AF286004">
    <property type="protein sequence ID" value="AAG24822.1"/>
    <property type="molecule type" value="Genomic_DNA"/>
</dbReference>
<dbReference type="RefSeq" id="WP_012128347.1">
    <property type="nucleotide sequence ID" value="NC_009783.1"/>
</dbReference>
<dbReference type="KEGG" id="vha:VIBHAR_02765"/>
<dbReference type="PATRIC" id="fig|338187.36.peg.2695"/>
<dbReference type="Proteomes" id="UP000008152">
    <property type="component" value="Chromosome I"/>
</dbReference>
<dbReference type="GO" id="GO:0061579">
    <property type="term" value="F:N-acyl homoserine lactone synthase activity"/>
    <property type="evidence" value="ECO:0007669"/>
    <property type="project" value="UniProtKB-EC"/>
</dbReference>
<dbReference type="GO" id="GO:0009372">
    <property type="term" value="P:quorum sensing"/>
    <property type="evidence" value="ECO:0007669"/>
    <property type="project" value="UniProtKB-KW"/>
</dbReference>
<dbReference type="InterPro" id="IPR035304">
    <property type="entry name" value="AHL_synthase"/>
</dbReference>
<dbReference type="Pfam" id="PF17327">
    <property type="entry name" value="AHL_synthase"/>
    <property type="match status" value="1"/>
</dbReference>
<evidence type="ECO:0000305" key="1"/>
<accession>A7MRY3</accession>
<accession>Q9EVD0</accession>
<feature type="chain" id="PRO_0000379484" description="Acyl-homoserine-lactone synthase LuxM">
    <location>
        <begin position="1"/>
        <end position="399"/>
    </location>
</feature>